<organism>
    <name type="scientific">Porphyromonas gingivalis (strain ATCC 33277 / DSM 20709 / CIP 103683 / JCM 12257 / NCTC 11834 / 2561)</name>
    <dbReference type="NCBI Taxonomy" id="431947"/>
    <lineage>
        <taxon>Bacteria</taxon>
        <taxon>Pseudomonadati</taxon>
        <taxon>Bacteroidota</taxon>
        <taxon>Bacteroidia</taxon>
        <taxon>Bacteroidales</taxon>
        <taxon>Porphyromonadaceae</taxon>
        <taxon>Porphyromonas</taxon>
    </lineage>
</organism>
<protein>
    <recommendedName>
        <fullName evidence="1">tRNA dimethylallyltransferase 2</fullName>
        <ecNumber evidence="1">2.5.1.75</ecNumber>
    </recommendedName>
    <alternativeName>
        <fullName evidence="1">Dimethylallyl diphosphate:tRNA dimethylallyltransferase 2</fullName>
        <shortName evidence="1">DMAPP:tRNA dimethylallyltransferase 2</shortName>
        <shortName evidence="1">DMATase 2</shortName>
    </alternativeName>
    <alternativeName>
        <fullName evidence="1">Isopentenyl-diphosphate:tRNA isopentenyltransferase 2</fullName>
        <shortName evidence="1">IPP transferase 2</shortName>
        <shortName evidence="1">IPPT 2</shortName>
        <shortName evidence="1">IPTase 2</shortName>
    </alternativeName>
</protein>
<gene>
    <name evidence="1" type="primary">miaA2</name>
    <name type="ordered locus">PGN_1626</name>
</gene>
<feature type="chain" id="PRO_1000098676" description="tRNA dimethylallyltransferase 2">
    <location>
        <begin position="1"/>
        <end position="300"/>
    </location>
</feature>
<feature type="region of interest" description="Interaction with substrate tRNA" evidence="1">
    <location>
        <begin position="38"/>
        <end position="41"/>
    </location>
</feature>
<feature type="binding site" evidence="1">
    <location>
        <begin position="13"/>
        <end position="20"/>
    </location>
    <ligand>
        <name>ATP</name>
        <dbReference type="ChEBI" id="CHEBI:30616"/>
    </ligand>
</feature>
<feature type="binding site" evidence="1">
    <location>
        <begin position="15"/>
        <end position="20"/>
    </location>
    <ligand>
        <name>substrate</name>
    </ligand>
</feature>
<feature type="site" description="Interaction with substrate tRNA" evidence="1">
    <location>
        <position position="104"/>
    </location>
</feature>
<feature type="site" description="Interaction with substrate tRNA" evidence="1">
    <location>
        <position position="126"/>
    </location>
</feature>
<comment type="function">
    <text evidence="1">Catalyzes the transfer of a dimethylallyl group onto the adenine at position 37 in tRNAs that read codons beginning with uridine, leading to the formation of N6-(dimethylallyl)adenosine (i(6)A).</text>
</comment>
<comment type="catalytic activity">
    <reaction evidence="1">
        <text>adenosine(37) in tRNA + dimethylallyl diphosphate = N(6)-dimethylallyladenosine(37) in tRNA + diphosphate</text>
        <dbReference type="Rhea" id="RHEA:26482"/>
        <dbReference type="Rhea" id="RHEA-COMP:10162"/>
        <dbReference type="Rhea" id="RHEA-COMP:10375"/>
        <dbReference type="ChEBI" id="CHEBI:33019"/>
        <dbReference type="ChEBI" id="CHEBI:57623"/>
        <dbReference type="ChEBI" id="CHEBI:74411"/>
        <dbReference type="ChEBI" id="CHEBI:74415"/>
        <dbReference type="EC" id="2.5.1.75"/>
    </reaction>
</comment>
<comment type="cofactor">
    <cofactor evidence="1">
        <name>Mg(2+)</name>
        <dbReference type="ChEBI" id="CHEBI:18420"/>
    </cofactor>
</comment>
<comment type="subunit">
    <text evidence="1">Monomer.</text>
</comment>
<comment type="similarity">
    <text evidence="1">Belongs to the IPP transferase family.</text>
</comment>
<sequence length="300" mass="34722">METQDHTLYVLLGPTGVGKTDLSLDIAERLGSPIISADSRQIFRELPIGTAAPTPEQRARVPHLFVGTHSVRDYYSAGMYEVEVLEALKELFRKYRGVLLTGGSMMYIDAVCRGIDDIPDPFPEVREELYARYAAEGLDGILAQLRLLDPDYYAKVDRRNYKRVIHGLEICLSTGRPFSSFHRHEAKERPFRIVKIGLYREREELCKRIDARVLEMMEQGLEEEARAVYPLRHLNALNTVGYKEMFEYFDGSIDRAEAVRRIQRNSRVYARKQMTWFRRDSTIRWFHPEADKGTVLTLVT</sequence>
<evidence type="ECO:0000255" key="1">
    <source>
        <dbReference type="HAMAP-Rule" id="MF_00185"/>
    </source>
</evidence>
<dbReference type="EC" id="2.5.1.75" evidence="1"/>
<dbReference type="EMBL" id="AP009380">
    <property type="protein sequence ID" value="BAG34145.1"/>
    <property type="molecule type" value="Genomic_DNA"/>
</dbReference>
<dbReference type="RefSeq" id="WP_012458417.1">
    <property type="nucleotide sequence ID" value="NC_010729.1"/>
</dbReference>
<dbReference type="SMR" id="B2RLA0"/>
<dbReference type="GeneID" id="29256794"/>
<dbReference type="KEGG" id="pgn:PGN_1626"/>
<dbReference type="eggNOG" id="COG0324">
    <property type="taxonomic scope" value="Bacteria"/>
</dbReference>
<dbReference type="HOGENOM" id="CLU_032616_0_1_10"/>
<dbReference type="OrthoDB" id="9776390at2"/>
<dbReference type="BioCyc" id="PGIN431947:G1G2V-1828-MONOMER"/>
<dbReference type="Proteomes" id="UP000008842">
    <property type="component" value="Chromosome"/>
</dbReference>
<dbReference type="GO" id="GO:0005524">
    <property type="term" value="F:ATP binding"/>
    <property type="evidence" value="ECO:0007669"/>
    <property type="project" value="UniProtKB-UniRule"/>
</dbReference>
<dbReference type="GO" id="GO:0052381">
    <property type="term" value="F:tRNA dimethylallyltransferase activity"/>
    <property type="evidence" value="ECO:0007669"/>
    <property type="project" value="UniProtKB-UniRule"/>
</dbReference>
<dbReference type="GO" id="GO:0006400">
    <property type="term" value="P:tRNA modification"/>
    <property type="evidence" value="ECO:0007669"/>
    <property type="project" value="TreeGrafter"/>
</dbReference>
<dbReference type="Gene3D" id="1.10.20.140">
    <property type="match status" value="1"/>
</dbReference>
<dbReference type="Gene3D" id="3.40.50.300">
    <property type="entry name" value="P-loop containing nucleotide triphosphate hydrolases"/>
    <property type="match status" value="1"/>
</dbReference>
<dbReference type="HAMAP" id="MF_00185">
    <property type="entry name" value="IPP_trans"/>
    <property type="match status" value="1"/>
</dbReference>
<dbReference type="InterPro" id="IPR039657">
    <property type="entry name" value="Dimethylallyltransferase"/>
</dbReference>
<dbReference type="InterPro" id="IPR018022">
    <property type="entry name" value="IPT"/>
</dbReference>
<dbReference type="InterPro" id="IPR027417">
    <property type="entry name" value="P-loop_NTPase"/>
</dbReference>
<dbReference type="NCBIfam" id="TIGR00174">
    <property type="entry name" value="miaA"/>
    <property type="match status" value="1"/>
</dbReference>
<dbReference type="PANTHER" id="PTHR11088">
    <property type="entry name" value="TRNA DIMETHYLALLYLTRANSFERASE"/>
    <property type="match status" value="1"/>
</dbReference>
<dbReference type="PANTHER" id="PTHR11088:SF60">
    <property type="entry name" value="TRNA DIMETHYLALLYLTRANSFERASE"/>
    <property type="match status" value="1"/>
</dbReference>
<dbReference type="Pfam" id="PF01715">
    <property type="entry name" value="IPPT"/>
    <property type="match status" value="1"/>
</dbReference>
<dbReference type="SUPFAM" id="SSF52540">
    <property type="entry name" value="P-loop containing nucleoside triphosphate hydrolases"/>
    <property type="match status" value="2"/>
</dbReference>
<accession>B2RLA0</accession>
<proteinExistence type="inferred from homology"/>
<reference key="1">
    <citation type="journal article" date="2008" name="DNA Res.">
        <title>Determination of the genome sequence of Porphyromonas gingivalis strain ATCC 33277 and genomic comparison with strain W83 revealed extensive genome rearrangements in P. gingivalis.</title>
        <authorList>
            <person name="Naito M."/>
            <person name="Hirakawa H."/>
            <person name="Yamashita A."/>
            <person name="Ohara N."/>
            <person name="Shoji M."/>
            <person name="Yukitake H."/>
            <person name="Nakayama K."/>
            <person name="Toh H."/>
            <person name="Yoshimura F."/>
            <person name="Kuhara S."/>
            <person name="Hattori M."/>
            <person name="Hayashi T."/>
            <person name="Nakayama K."/>
        </authorList>
    </citation>
    <scope>NUCLEOTIDE SEQUENCE [LARGE SCALE GENOMIC DNA]</scope>
    <source>
        <strain>ATCC 33277 / DSM 20709 / CIP 103683 / JCM 12257 / NCTC 11834 / 2561</strain>
    </source>
</reference>
<keyword id="KW-0067">ATP-binding</keyword>
<keyword id="KW-0460">Magnesium</keyword>
<keyword id="KW-0547">Nucleotide-binding</keyword>
<keyword id="KW-0808">Transferase</keyword>
<keyword id="KW-0819">tRNA processing</keyword>
<name>MIAA2_PORG3</name>